<gene>
    <name evidence="1" type="primary">PB1</name>
</gene>
<keyword id="KW-1262">Eukaryotic host gene expression shutoff by virus</keyword>
<keyword id="KW-1191">Eukaryotic host transcription shutoff by virus</keyword>
<keyword id="KW-1035">Host cytoplasm</keyword>
<keyword id="KW-1190">Host gene expression shutoff by virus</keyword>
<keyword id="KW-1048">Host nucleus</keyword>
<keyword id="KW-0945">Host-virus interaction</keyword>
<keyword id="KW-1104">Inhibition of host RNA polymerase II by virus</keyword>
<keyword id="KW-0547">Nucleotide-binding</keyword>
<keyword id="KW-0548">Nucleotidyltransferase</keyword>
<keyword id="KW-0597">Phosphoprotein</keyword>
<keyword id="KW-0696">RNA-directed RNA polymerase</keyword>
<keyword id="KW-0808">Transferase</keyword>
<keyword id="KW-0693">Viral RNA replication</keyword>
<keyword id="KW-1195">Viral transcription</keyword>
<protein>
    <recommendedName>
        <fullName evidence="1">RNA-directed RNA polymerase catalytic subunit</fullName>
        <ecNumber evidence="1">2.7.7.48</ecNumber>
    </recommendedName>
    <alternativeName>
        <fullName evidence="1">Polymerase basic protein 1</fullName>
        <shortName evidence="1">PB1</shortName>
    </alternativeName>
    <alternativeName>
        <fullName evidence="1">RNA-directed RNA polymerase subunit P1</fullName>
    </alternativeName>
</protein>
<reference key="1">
    <citation type="journal article" date="2004" name="Nature">
        <title>Genesis of a highly pathogenic and potentially pandemic H5N1 influenza virus in eastern Asia.</title>
        <authorList>
            <person name="Li K.S."/>
            <person name="Guan Y."/>
            <person name="Wang J."/>
            <person name="Smith G.J.D."/>
            <person name="Xu K.M."/>
            <person name="Duan L."/>
            <person name="Rahardjo A.P."/>
            <person name="Puthavathana P."/>
            <person name="Buranathai C."/>
            <person name="Nguyen T.D."/>
            <person name="Estoepangestie A.T.S."/>
            <person name="Chaisingh A."/>
            <person name="Auewarakul P."/>
            <person name="Long H.T."/>
            <person name="Hanh N.T.H."/>
            <person name="Webby R.J."/>
            <person name="Poon L.L.M."/>
            <person name="Chen H."/>
            <person name="Shortridge K.F."/>
            <person name="Yuen K.Y."/>
            <person name="Webster R.G."/>
            <person name="Peiris J.S.M."/>
        </authorList>
    </citation>
    <scope>NUCLEOTIDE SEQUENCE [GENOMIC RNA]</scope>
</reference>
<reference key="2">
    <citation type="submission" date="2008-03" db="EMBL/GenBank/DDBJ databases">
        <authorList>
            <person name="Li K.S."/>
            <person name="Guan Y."/>
            <person name="Wang J."/>
            <person name="Smith G.J.D."/>
            <person name="Xu K.M."/>
            <person name="Duan L."/>
            <person name="Rahardjo A.P."/>
            <person name="Puthavathana P."/>
            <person name="Buranathai C."/>
            <person name="Nguyen T.D."/>
            <person name="Estoepangestie A.T.S."/>
            <person name="Chaisingh A."/>
            <person name="Auewarakul P."/>
            <person name="Long H.T."/>
            <person name="Hanh N.T.H."/>
            <person name="Lim W."/>
            <person name="Webby R.J."/>
            <person name="Poon L.L.M."/>
            <person name="Chen H."/>
            <person name="Shortridge K.F."/>
            <person name="Yuen K.Y."/>
            <person name="Webster R.G."/>
            <person name="Peiris J.S.M."/>
        </authorList>
    </citation>
    <scope>SEQUENCE REVISION</scope>
</reference>
<dbReference type="EC" id="2.7.7.48" evidence="1"/>
<dbReference type="EMBL" id="AY651697">
    <property type="protein sequence ID" value="AAT73528.2"/>
    <property type="molecule type" value="Genomic_RNA"/>
</dbReference>
<dbReference type="SMR" id="Q6DNQ5"/>
<dbReference type="GO" id="GO:0030430">
    <property type="term" value="C:host cell cytoplasm"/>
    <property type="evidence" value="ECO:0007669"/>
    <property type="project" value="UniProtKB-SubCell"/>
</dbReference>
<dbReference type="GO" id="GO:0042025">
    <property type="term" value="C:host cell nucleus"/>
    <property type="evidence" value="ECO:0007669"/>
    <property type="project" value="UniProtKB-SubCell"/>
</dbReference>
<dbReference type="GO" id="GO:0000166">
    <property type="term" value="F:nucleotide binding"/>
    <property type="evidence" value="ECO:0007669"/>
    <property type="project" value="UniProtKB-UniRule"/>
</dbReference>
<dbReference type="GO" id="GO:0003723">
    <property type="term" value="F:RNA binding"/>
    <property type="evidence" value="ECO:0007669"/>
    <property type="project" value="InterPro"/>
</dbReference>
<dbReference type="GO" id="GO:0003968">
    <property type="term" value="F:RNA-directed RNA polymerase activity"/>
    <property type="evidence" value="ECO:0007669"/>
    <property type="project" value="UniProtKB-UniRule"/>
</dbReference>
<dbReference type="GO" id="GO:0006351">
    <property type="term" value="P:DNA-templated transcription"/>
    <property type="evidence" value="ECO:0007669"/>
    <property type="project" value="UniProtKB-UniRule"/>
</dbReference>
<dbReference type="GO" id="GO:0039657">
    <property type="term" value="P:symbiont-mediated suppression of host gene expression"/>
    <property type="evidence" value="ECO:0007669"/>
    <property type="project" value="UniProtKB-KW"/>
</dbReference>
<dbReference type="GO" id="GO:0039523">
    <property type="term" value="P:symbiont-mediated suppression of host mRNA transcription via inhibition of RNA polymerase II activity"/>
    <property type="evidence" value="ECO:0007669"/>
    <property type="project" value="UniProtKB-UniRule"/>
</dbReference>
<dbReference type="GO" id="GO:0039694">
    <property type="term" value="P:viral RNA genome replication"/>
    <property type="evidence" value="ECO:0007669"/>
    <property type="project" value="UniProtKB-UniRule"/>
</dbReference>
<dbReference type="GO" id="GO:0019083">
    <property type="term" value="P:viral transcription"/>
    <property type="evidence" value="ECO:0007669"/>
    <property type="project" value="UniProtKB-KW"/>
</dbReference>
<dbReference type="Gene3D" id="6.10.140.720">
    <property type="match status" value="1"/>
</dbReference>
<dbReference type="HAMAP" id="MF_04065">
    <property type="entry name" value="INFV_RDRP"/>
    <property type="match status" value="1"/>
</dbReference>
<dbReference type="InterPro" id="IPR007099">
    <property type="entry name" value="RNA-dir_pol_NSvirus"/>
</dbReference>
<dbReference type="InterPro" id="IPR001407">
    <property type="entry name" value="RNA_pol_PB1_influenza"/>
</dbReference>
<dbReference type="Pfam" id="PF00602">
    <property type="entry name" value="Flu_PB1"/>
    <property type="match status" value="1"/>
</dbReference>
<dbReference type="PIRSF" id="PIRSF000827">
    <property type="entry name" value="RdRPol_OMV"/>
    <property type="match status" value="1"/>
</dbReference>
<dbReference type="PROSITE" id="PS50525">
    <property type="entry name" value="RDRP_SSRNA_NEG_SEG"/>
    <property type="match status" value="1"/>
</dbReference>
<evidence type="ECO:0000255" key="1">
    <source>
        <dbReference type="HAMAP-Rule" id="MF_04065"/>
    </source>
</evidence>
<evidence type="ECO:0000256" key="2">
    <source>
        <dbReference type="SAM" id="MobiDB-lite"/>
    </source>
</evidence>
<sequence>MDVNPTLLFLKVPVQNAISTTFPYTGDPPYSHGTGTGYTMDTVNRTHQYSEKGKWTTNTETGAPQLNPIDGPLPEDNEPSGYAQTDCVLEAMAFLEESHPGIFENSCLETMEIVQQTRVDKLTQGRQTYDWTLNRNQPAATALANTIEIFRSNGLTANESGRLIDFLKDVMESMDKEEMEITTHFQRKRRVRDNMTKKMVTQRTIGKKKQRLNKKSYLIRALTLNTMTKDAERGKLKRRAIATPGMQIRGFVYFVETLARGICEKLEQSGLPVGGNEKKAKLANVVRKMMTNSQDTELSFTITGDNTKWNENQNPRMFLAMITYITRNQPEWFRNVLSIAPIMFSNKMARLGKGYMFESKSMKLRTQIPAEMLANIDLKYFNELTKKKIEKIRPLLIDGTASLSPGMMMGMFNMLSTVLGVSILNLGQKRYTKTTYWWDGLQSSDDFALIVNAPNHEGIQAGVDRFYRTCKLVGINMSKKKSYINRTGTFEFTSFFYRYGFVANFSMELPSFGVSGINESADMSIGVTVIKNNMINNDLGPATAQMALQLFIKDYRYTYRCHRGDSQIQTRRSFELKKLWEQTRSKAGLLVSDGGPNLYNIRNLHIPEVCLKWELMDEDYQGRLCNPLNPFVSHKEIESVNNTVVMPAHGPAKSMEYDAVATTHSWIPKRNRSILNTSQRGILEDEQMYQKCCNLFEKFFPSSSYRRPVGISSMVEAMVSRARIDARIDFESGRIKKEEFAEIMKICSTIEELRRQK</sequence>
<organism>
    <name type="scientific">Influenza A virus (strain A/Chicken/Shantou/4231/2003 H5N1 genotype V)</name>
    <dbReference type="NCBI Taxonomy" id="284184"/>
    <lineage>
        <taxon>Viruses</taxon>
        <taxon>Riboviria</taxon>
        <taxon>Orthornavirae</taxon>
        <taxon>Negarnaviricota</taxon>
        <taxon>Polyploviricotina</taxon>
        <taxon>Insthoviricetes</taxon>
        <taxon>Articulavirales</taxon>
        <taxon>Orthomyxoviridae</taxon>
        <taxon>Alphainfluenzavirus</taxon>
        <taxon>Alphainfluenzavirus influenzae</taxon>
        <taxon>Influenza A virus</taxon>
    </lineage>
</organism>
<accession>Q6DNQ5</accession>
<comment type="function">
    <text evidence="1">RNA-dependent RNA polymerase which is responsible for replication and transcription of virus RNA segments. The transcription of viral mRNAs occurs by a unique mechanism called cap-snatching. 5' methylated caps of cellular mRNAs are cleaved after 10-13 nucleotides by PA. In turn, these short capped RNAs are used as primers by PB1 for transcription of viral mRNAs. During virus replication, PB1 initiates RNA synthesis and copy vRNA into complementary RNA (cRNA) which in turn serves as a template for the production of more vRNAs.</text>
</comment>
<comment type="catalytic activity">
    <reaction evidence="1">
        <text>RNA(n) + a ribonucleoside 5'-triphosphate = RNA(n+1) + diphosphate</text>
        <dbReference type="Rhea" id="RHEA:21248"/>
        <dbReference type="Rhea" id="RHEA-COMP:14527"/>
        <dbReference type="Rhea" id="RHEA-COMP:17342"/>
        <dbReference type="ChEBI" id="CHEBI:33019"/>
        <dbReference type="ChEBI" id="CHEBI:61557"/>
        <dbReference type="ChEBI" id="CHEBI:140395"/>
        <dbReference type="EC" id="2.7.7.48"/>
    </reaction>
</comment>
<comment type="subunit">
    <text evidence="1">Influenza RNA polymerase is composed of three subunits: PB1, PB2 and PA. Interacts (via N-terminus) with PA (via C-terminus). Interacts (via C-terminus) with PB2 (via N-terminus); this interaction is essential for transcription initiation.</text>
</comment>
<comment type="subcellular location">
    <subcellularLocation>
        <location evidence="1">Host nucleus</location>
    </subcellularLocation>
    <subcellularLocation>
        <location evidence="1">Host cytoplasm</location>
    </subcellularLocation>
</comment>
<comment type="PTM">
    <text evidence="1">Phosphorylated by host PRKCA.</text>
</comment>
<comment type="similarity">
    <text evidence="1">Belongs to the influenza viruses polymerase PB1 family.</text>
</comment>
<name>RDRP_I03A1</name>
<organismHost>
    <name type="scientific">Aves</name>
    <dbReference type="NCBI Taxonomy" id="8782"/>
</organismHost>
<organismHost>
    <name type="scientific">Felis catus</name>
    <name type="common">Cat</name>
    <name type="synonym">Felis silvestris catus</name>
    <dbReference type="NCBI Taxonomy" id="9685"/>
</organismHost>
<organismHost>
    <name type="scientific">Homo sapiens</name>
    <name type="common">Human</name>
    <dbReference type="NCBI Taxonomy" id="9606"/>
</organismHost>
<organismHost>
    <name type="scientific">Panthera pardus</name>
    <name type="common">Leopard</name>
    <name type="synonym">Felis pardus</name>
    <dbReference type="NCBI Taxonomy" id="9691"/>
</organismHost>
<organismHost>
    <name type="scientific">Panthera tigris</name>
    <name type="common">Tiger</name>
    <dbReference type="NCBI Taxonomy" id="9694"/>
</organismHost>
<organismHost>
    <name type="scientific">Sus scrofa</name>
    <name type="common">Pig</name>
    <dbReference type="NCBI Taxonomy" id="9823"/>
</organismHost>
<proteinExistence type="inferred from homology"/>
<feature type="chain" id="PRO_0000311171" description="RNA-directed RNA polymerase catalytic subunit">
    <location>
        <begin position="1"/>
        <end position="757"/>
    </location>
</feature>
<feature type="domain" description="RdRp catalytic" evidence="1">
    <location>
        <begin position="286"/>
        <end position="483"/>
    </location>
</feature>
<feature type="region of interest" description="Disordered" evidence="2">
    <location>
        <begin position="52"/>
        <end position="82"/>
    </location>
</feature>
<feature type="region of interest" description="Promoter-binding site" evidence="1">
    <location>
        <begin position="249"/>
        <end position="256"/>
    </location>
</feature>
<feature type="short sequence motif" description="Nuclear localization signal" evidence="1">
    <location>
        <begin position="187"/>
        <end position="195"/>
    </location>
</feature>
<feature type="short sequence motif" description="Nuclear localization signal" evidence="1">
    <location>
        <begin position="203"/>
        <end position="216"/>
    </location>
</feature>
<feature type="compositionally biased region" description="Polar residues" evidence="2">
    <location>
        <begin position="55"/>
        <end position="64"/>
    </location>
</feature>